<evidence type="ECO:0000255" key="1"/>
<evidence type="ECO:0000256" key="2">
    <source>
        <dbReference type="SAM" id="MobiDB-lite"/>
    </source>
</evidence>
<evidence type="ECO:0000269" key="3">
    <source>
    </source>
</evidence>
<evidence type="ECO:0000269" key="4">
    <source>
    </source>
</evidence>
<evidence type="ECO:0000269" key="5">
    <source>
    </source>
</evidence>
<evidence type="ECO:0000269" key="6">
    <source>
    </source>
</evidence>
<evidence type="ECO:0000305" key="7"/>
<comment type="function">
    <text evidence="3 4 5 6">Involved in biofilm formation, cell division, autolysis and the regulation of acid and oxidative stress tolerance. May be associated with systemic virulence in blood.</text>
</comment>
<comment type="subcellular location">
    <subcellularLocation>
        <location evidence="7">Cell envelope</location>
    </subcellularLocation>
</comment>
<comment type="disruption phenotype">
    <text evidence="3">Cells form longer chains and sparse microcolonies, are more resistant to phagocytosis, show greater level of platelet aggregation, but are unable to form biofilm at least in vitro.</text>
</comment>
<comment type="miscellaneous">
    <text>As a result of luxS inactivation, brpA expression was decreased by 70% in early-exponential-phase cells. Also, brpA expression was down-regulated in response to the deficiency of smu486 and smu487.</text>
</comment>
<comment type="similarity">
    <text evidence="7">Belongs to the LytR/CpsA/Psr (LCP) family.</text>
</comment>
<name>BRPA_STRMU</name>
<feature type="signal peptide" evidence="1">
    <location>
        <begin position="1"/>
        <end position="26"/>
    </location>
</feature>
<feature type="chain" id="PRO_0000251140" description="Biofilm regulatory protein A">
    <location>
        <begin position="27"/>
        <end position="406"/>
    </location>
</feature>
<feature type="region of interest" description="Disordered" evidence="2">
    <location>
        <begin position="347"/>
        <end position="406"/>
    </location>
</feature>
<feature type="compositionally biased region" description="Low complexity" evidence="2">
    <location>
        <begin position="347"/>
        <end position="397"/>
    </location>
</feature>
<accession>Q8DVR0</accession>
<dbReference type="EMBL" id="AE014133">
    <property type="protein sequence ID" value="AAN58164.1"/>
    <property type="molecule type" value="Genomic_DNA"/>
</dbReference>
<dbReference type="RefSeq" id="NP_720858.1">
    <property type="nucleotide sequence ID" value="NC_004350.2"/>
</dbReference>
<dbReference type="RefSeq" id="WP_002262611.1">
    <property type="nucleotide sequence ID" value="NC_004350.2"/>
</dbReference>
<dbReference type="SMR" id="Q8DVR0"/>
<dbReference type="STRING" id="210007.SMU_410"/>
<dbReference type="BindingDB" id="Q8DVR0"/>
<dbReference type="DNASU" id="1029569"/>
<dbReference type="GeneID" id="93860013"/>
<dbReference type="KEGG" id="smu:SMU_410"/>
<dbReference type="PATRIC" id="fig|210007.7.peg.360"/>
<dbReference type="eggNOG" id="COG1316">
    <property type="taxonomic scope" value="Bacteria"/>
</dbReference>
<dbReference type="HOGENOM" id="CLU_016455_2_0_9"/>
<dbReference type="OrthoDB" id="27330at2"/>
<dbReference type="PhylomeDB" id="Q8DVR0"/>
<dbReference type="Proteomes" id="UP000002512">
    <property type="component" value="Chromosome"/>
</dbReference>
<dbReference type="GO" id="GO:0030313">
    <property type="term" value="C:cell envelope"/>
    <property type="evidence" value="ECO:0007669"/>
    <property type="project" value="UniProtKB-SubCell"/>
</dbReference>
<dbReference type="Gene3D" id="3.40.630.190">
    <property type="entry name" value="LCP protein"/>
    <property type="match status" value="1"/>
</dbReference>
<dbReference type="InterPro" id="IPR050922">
    <property type="entry name" value="LytR/CpsA/Psr_CW_biosynth"/>
</dbReference>
<dbReference type="InterPro" id="IPR004474">
    <property type="entry name" value="LytR_CpsA_psr"/>
</dbReference>
<dbReference type="NCBIfam" id="TIGR00350">
    <property type="entry name" value="lytR_cpsA_psr"/>
    <property type="match status" value="1"/>
</dbReference>
<dbReference type="NCBIfam" id="NF047591">
    <property type="entry name" value="transregBrpAStrep"/>
    <property type="match status" value="1"/>
</dbReference>
<dbReference type="PANTHER" id="PTHR33392">
    <property type="entry name" value="POLYISOPRENYL-TEICHOIC ACID--PEPTIDOGLYCAN TEICHOIC ACID TRANSFERASE TAGU"/>
    <property type="match status" value="1"/>
</dbReference>
<dbReference type="PANTHER" id="PTHR33392:SF6">
    <property type="entry name" value="POLYISOPRENYL-TEICHOIC ACID--PEPTIDOGLYCAN TEICHOIC ACID TRANSFERASE TAGU"/>
    <property type="match status" value="1"/>
</dbReference>
<dbReference type="Pfam" id="PF03816">
    <property type="entry name" value="LytR_cpsA_psr"/>
    <property type="match status" value="1"/>
</dbReference>
<protein>
    <recommendedName>
        <fullName>Biofilm regulatory protein A</fullName>
    </recommendedName>
</protein>
<reference key="1">
    <citation type="journal article" date="2002" name="Proc. Natl. Acad. Sci. U.S.A.">
        <title>Genome sequence of Streptococcus mutans UA159, a cariogenic dental pathogen.</title>
        <authorList>
            <person name="Ajdic D.J."/>
            <person name="McShan W.M."/>
            <person name="McLaughlin R.E."/>
            <person name="Savic G."/>
            <person name="Chang J."/>
            <person name="Carson M.B."/>
            <person name="Primeaux C."/>
            <person name="Tian R."/>
            <person name="Kenton S."/>
            <person name="Jia H.G."/>
            <person name="Lin S.P."/>
            <person name="Qian Y."/>
            <person name="Li S."/>
            <person name="Zhu H."/>
            <person name="Najar F.Z."/>
            <person name="Lai H."/>
            <person name="White J."/>
            <person name="Roe B.A."/>
            <person name="Ferretti J.J."/>
        </authorList>
    </citation>
    <scope>NUCLEOTIDE SEQUENCE [LARGE SCALE GENOMIC DNA]</scope>
    <source>
        <strain>ATCC 700610 / UA159</strain>
    </source>
</reference>
<reference key="2">
    <citation type="journal article" date="2002" name="Appl. Environ. Microbiol.">
        <title>Functional genomics approach to identifying genes required for biofilm development by Streptococcus mutans.</title>
        <authorList>
            <person name="Wen Z.T."/>
            <person name="Burne R.A."/>
        </authorList>
    </citation>
    <scope>FUNCTION</scope>
    <scope>CHARACTERIZATION</scope>
    <scope>SUBCELLULAR LOCATION</scope>
    <scope>DISRUPTION PHENOTYPE</scope>
    <source>
        <strain>ATCC 700610 / UA159</strain>
    </source>
</reference>
<reference key="3">
    <citation type="journal article" date="2004" name="J. Bacteriol.">
        <title>LuxS-mediated signaling in Streptococcus mutans is involved in regulation of acid and oxidative stress tolerance and biofilm formation.</title>
        <authorList>
            <person name="Wen Z.T."/>
            <person name="Burne R.A."/>
        </authorList>
    </citation>
    <scope>REGULATION</scope>
    <source>
        <strain>ATCC 700610 / UA159</strain>
    </source>
</reference>
<reference key="4">
    <citation type="journal article" date="2005" name="Microbes Infect.">
        <title>Contribution of biofilm regulatory protein A of Streptococcus mutans, to systemic virulence.</title>
        <authorList>
            <person name="Nakano K."/>
            <person name="Fujita K."/>
            <person name="Nishimura K."/>
            <person name="Nomura R."/>
            <person name="Ooshima T."/>
        </authorList>
    </citation>
    <scope>FUNCTION</scope>
    <scope>CHARACTERIZATION</scope>
    <source>
        <strain>MT8148 / Serotype c</strain>
    </source>
</reference>
<reference key="5">
    <citation type="journal article" date="2005" name="Microbiology">
        <title>The putative autolysin regulator LytR in Streptococcus mutans plays a role in cell division and is growth-phase regulated.</title>
        <authorList>
            <person name="Chatfield C.H."/>
            <person name="Koo H."/>
            <person name="Quivey R.G. Jr."/>
        </authorList>
    </citation>
    <scope>FUNCTION</scope>
    <scope>CHARACTERIZATION</scope>
    <source>
        <strain>ATCC 700610 / UA159</strain>
    </source>
</reference>
<reference key="6">
    <citation type="journal article" date="2006" name="J. Bacteriol.">
        <title>Influence of BrpA on critical virulence attributes of Streptococcus mutans.</title>
        <authorList>
            <person name="Wen Z.T."/>
            <person name="Baker H.V."/>
            <person name="Burne R.A."/>
        </authorList>
    </citation>
    <scope>FUNCTION</scope>
    <scope>CHARACTERIZATION</scope>
    <source>
        <strain>ATCC 700610 / UA159</strain>
    </source>
</reference>
<keyword id="KW-1185">Reference proteome</keyword>
<keyword id="KW-0732">Signal</keyword>
<keyword id="KW-0843">Virulence</keyword>
<sequence>MKIGKKILIMLVTIFLTSLVALGVYATSIYNFSLGEFSKTFKDYGTGSGKDVIADEKPFSILLMGVDTGSSERTSKWEGNSDSMILVTVNPKTKKTTMTSLERDILVKLSGSKTNDQTGYDAKLNAAYAAGGAKMAIMTVQDMLDIKIDKYVQINMEGLVQLVDAVGGITVTNHFDFPISIEEHEPEFTASVEPGTHKINGEQALVYSRMRYDDPDGDYGRQKRQREVISKVLKKILALDSVSKYRKILSAVSKNMQTNIEISSSTIPKLLGYSDALKSIRTYQLKGEGTTIDGGSYQLVTSKELLKAQNRIKGQLGLKKSTAENLKTTASLYENFYGGDTSIYDSSSSASDYSSSGNYSGSSSDYGSSSSYGSNSSSGSSSDYSGQNSYNQGNYQQPAAGTGIGN</sequence>
<organism>
    <name type="scientific">Streptococcus mutans serotype c (strain ATCC 700610 / UA159)</name>
    <dbReference type="NCBI Taxonomy" id="210007"/>
    <lineage>
        <taxon>Bacteria</taxon>
        <taxon>Bacillati</taxon>
        <taxon>Bacillota</taxon>
        <taxon>Bacilli</taxon>
        <taxon>Lactobacillales</taxon>
        <taxon>Streptococcaceae</taxon>
        <taxon>Streptococcus</taxon>
    </lineage>
</organism>
<proteinExistence type="evidence at protein level"/>
<gene>
    <name type="primary">brpA</name>
    <name type="ordered locus">SMU_410</name>
</gene>